<proteinExistence type="inferred from homology"/>
<gene>
    <name type="ordered locus">MM_0822</name>
</gene>
<feature type="chain" id="PRO_0000139470" description="UPF0235 protein MM_0822">
    <location>
        <begin position="1"/>
        <end position="108"/>
    </location>
</feature>
<comment type="similarity">
    <text evidence="1">Belongs to the UPF0235 family.</text>
</comment>
<protein>
    <recommendedName>
        <fullName evidence="1">UPF0235 protein MM_0822</fullName>
    </recommendedName>
</protein>
<dbReference type="EMBL" id="AE008384">
    <property type="protein sequence ID" value="AAM30518.1"/>
    <property type="molecule type" value="Genomic_DNA"/>
</dbReference>
<dbReference type="RefSeq" id="WP_011032772.1">
    <property type="nucleotide sequence ID" value="NC_003901.1"/>
</dbReference>
<dbReference type="SMR" id="Q8PYN9"/>
<dbReference type="KEGG" id="mma:MM_0822"/>
<dbReference type="PATRIC" id="fig|192952.21.peg.974"/>
<dbReference type="eggNOG" id="arCOG04058">
    <property type="taxonomic scope" value="Archaea"/>
</dbReference>
<dbReference type="HOGENOM" id="CLU_130694_6_1_2"/>
<dbReference type="Proteomes" id="UP000000595">
    <property type="component" value="Chromosome"/>
</dbReference>
<dbReference type="Gene3D" id="3.30.1200.10">
    <property type="entry name" value="YggU-like"/>
    <property type="match status" value="1"/>
</dbReference>
<dbReference type="HAMAP" id="MF_00634">
    <property type="entry name" value="UPF0235"/>
    <property type="match status" value="1"/>
</dbReference>
<dbReference type="InterPro" id="IPR003746">
    <property type="entry name" value="DUF167"/>
</dbReference>
<dbReference type="InterPro" id="IPR036591">
    <property type="entry name" value="YggU-like_sf"/>
</dbReference>
<dbReference type="NCBIfam" id="TIGR00251">
    <property type="entry name" value="DUF167 family protein"/>
    <property type="match status" value="1"/>
</dbReference>
<dbReference type="Pfam" id="PF02594">
    <property type="entry name" value="DUF167"/>
    <property type="match status" value="1"/>
</dbReference>
<dbReference type="SMART" id="SM01152">
    <property type="entry name" value="DUF167"/>
    <property type="match status" value="1"/>
</dbReference>
<dbReference type="SUPFAM" id="SSF69786">
    <property type="entry name" value="YggU-like"/>
    <property type="match status" value="1"/>
</dbReference>
<organism>
    <name type="scientific">Methanosarcina mazei (strain ATCC BAA-159 / DSM 3647 / Goe1 / Go1 / JCM 11833 / OCM 88)</name>
    <name type="common">Methanosarcina frisia</name>
    <dbReference type="NCBI Taxonomy" id="192952"/>
    <lineage>
        <taxon>Archaea</taxon>
        <taxon>Methanobacteriati</taxon>
        <taxon>Methanobacteriota</taxon>
        <taxon>Stenosarchaea group</taxon>
        <taxon>Methanomicrobia</taxon>
        <taxon>Methanosarcinales</taxon>
        <taxon>Methanosarcinaceae</taxon>
        <taxon>Methanosarcina</taxon>
    </lineage>
</organism>
<reference key="1">
    <citation type="journal article" date="2002" name="J. Mol. Microbiol. Biotechnol.">
        <title>The genome of Methanosarcina mazei: evidence for lateral gene transfer between Bacteria and Archaea.</title>
        <authorList>
            <person name="Deppenmeier U."/>
            <person name="Johann A."/>
            <person name="Hartsch T."/>
            <person name="Merkl R."/>
            <person name="Schmitz R.A."/>
            <person name="Martinez-Arias R."/>
            <person name="Henne A."/>
            <person name="Wiezer A."/>
            <person name="Baeumer S."/>
            <person name="Jacobi C."/>
            <person name="Brueggemann H."/>
            <person name="Lienard T."/>
            <person name="Christmann A."/>
            <person name="Boemecke M."/>
            <person name="Steckel S."/>
            <person name="Bhattacharyya A."/>
            <person name="Lykidis A."/>
            <person name="Overbeek R."/>
            <person name="Klenk H.-P."/>
            <person name="Gunsalus R.P."/>
            <person name="Fritz H.-J."/>
            <person name="Gottschalk G."/>
        </authorList>
    </citation>
    <scope>NUCLEOTIDE SEQUENCE [LARGE SCALE GENOMIC DNA]</scope>
    <source>
        <strain>ATCC BAA-159 / DSM 3647 / Goe1 / Go1 / JCM 11833 / OCM 88</strain>
    </source>
</reference>
<accession>Q8PYN9</accession>
<evidence type="ECO:0000255" key="1">
    <source>
        <dbReference type="HAMAP-Rule" id="MF_00634"/>
    </source>
</evidence>
<sequence length="108" mass="11793">MRSMSFEEAIKSLDSGIIVDIEVTPGSRSLSVPSGYNEWRKRIEVKLTRNAQKGKANEQLIESLAELFGICSSDIFISSGATSSKKSLLIKGVSYQQAVLVFGKHLKG</sequence>
<name>Y822_METMA</name>